<protein>
    <recommendedName>
        <fullName evidence="1">UPF0441 protein YgiB</fullName>
    </recommendedName>
</protein>
<accession>B5FV55</accession>
<proteinExistence type="inferred from homology"/>
<organism>
    <name type="scientific">Salmonella dublin (strain CT_02021853)</name>
    <dbReference type="NCBI Taxonomy" id="439851"/>
    <lineage>
        <taxon>Bacteria</taxon>
        <taxon>Pseudomonadati</taxon>
        <taxon>Pseudomonadota</taxon>
        <taxon>Gammaproteobacteria</taxon>
        <taxon>Enterobacterales</taxon>
        <taxon>Enterobacteriaceae</taxon>
        <taxon>Salmonella</taxon>
    </lineage>
</organism>
<comment type="similarity">
    <text evidence="1">Belongs to the UPF0441 family.</text>
</comment>
<sequence length="223" mass="23387">MKRTKSIHHASFRKSWSARHLTPVALAVTAVFMLAGCEKSDETVSLYQNADDCSAANPGKSAECTTAYNNALKEAERTAPKYATREDCVAEFGEGQCQQAPAQAGMAPENQAQAQQSSGSFWMPLMAGYMMGRLMGGGAGFAQQPLFSSKNPASPAYGKYTDAAGKNYGAAQPGRTMTVPKTAMAPKPATTTTVTRGGFGESVAKQSTMQRSAAGTSTRSMGG</sequence>
<feature type="chain" id="PRO_1000138348" description="UPF0441 protein YgiB">
    <location>
        <begin position="1"/>
        <end position="223"/>
    </location>
</feature>
<feature type="region of interest" description="Disordered" evidence="2">
    <location>
        <begin position="178"/>
        <end position="223"/>
    </location>
</feature>
<feature type="compositionally biased region" description="Low complexity" evidence="2">
    <location>
        <begin position="178"/>
        <end position="195"/>
    </location>
</feature>
<feature type="compositionally biased region" description="Polar residues" evidence="2">
    <location>
        <begin position="204"/>
        <end position="223"/>
    </location>
</feature>
<evidence type="ECO:0000255" key="1">
    <source>
        <dbReference type="HAMAP-Rule" id="MF_01188"/>
    </source>
</evidence>
<evidence type="ECO:0000256" key="2">
    <source>
        <dbReference type="SAM" id="MobiDB-lite"/>
    </source>
</evidence>
<dbReference type="EMBL" id="CP001144">
    <property type="protein sequence ID" value="ACH74599.1"/>
    <property type="molecule type" value="Genomic_DNA"/>
</dbReference>
<dbReference type="RefSeq" id="WP_000831528.1">
    <property type="nucleotide sequence ID" value="NC_011205.1"/>
</dbReference>
<dbReference type="KEGG" id="sed:SeD_A3540"/>
<dbReference type="HOGENOM" id="CLU_095624_0_0_6"/>
<dbReference type="Proteomes" id="UP000008322">
    <property type="component" value="Chromosome"/>
</dbReference>
<dbReference type="HAMAP" id="MF_01188">
    <property type="entry name" value="UPF0441"/>
    <property type="match status" value="1"/>
</dbReference>
<dbReference type="InterPro" id="IPR009576">
    <property type="entry name" value="Biofilm_formation_YgiB"/>
</dbReference>
<dbReference type="NCBIfam" id="NF008655">
    <property type="entry name" value="PRK11653.1"/>
    <property type="match status" value="1"/>
</dbReference>
<dbReference type="Pfam" id="PF06693">
    <property type="entry name" value="DUF1190"/>
    <property type="match status" value="1"/>
</dbReference>
<reference key="1">
    <citation type="journal article" date="2011" name="J. Bacteriol.">
        <title>Comparative genomics of 28 Salmonella enterica isolates: evidence for CRISPR-mediated adaptive sublineage evolution.</title>
        <authorList>
            <person name="Fricke W.F."/>
            <person name="Mammel M.K."/>
            <person name="McDermott P.F."/>
            <person name="Tartera C."/>
            <person name="White D.G."/>
            <person name="Leclerc J.E."/>
            <person name="Ravel J."/>
            <person name="Cebula T.A."/>
        </authorList>
    </citation>
    <scope>NUCLEOTIDE SEQUENCE [LARGE SCALE GENOMIC DNA]</scope>
    <source>
        <strain>CT_02021853</strain>
    </source>
</reference>
<name>YGIB_SALDC</name>
<gene>
    <name evidence="1" type="primary">ygiB</name>
    <name type="ordered locus">SeD_A3540</name>
</gene>